<name>CDK12_XENTR</name>
<accession>B5DE93</accession>
<keyword id="KW-0067">ATP-binding</keyword>
<keyword id="KW-0418">Kinase</keyword>
<keyword id="KW-0507">mRNA processing</keyword>
<keyword id="KW-0508">mRNA splicing</keyword>
<keyword id="KW-0547">Nucleotide-binding</keyword>
<keyword id="KW-0539">Nucleus</keyword>
<keyword id="KW-1185">Reference proteome</keyword>
<keyword id="KW-0723">Serine/threonine-protein kinase</keyword>
<keyword id="KW-0808">Transferase</keyword>
<dbReference type="EC" id="2.7.11.22"/>
<dbReference type="EC" id="2.7.11.23"/>
<dbReference type="EMBL" id="BC168577">
    <property type="protein sequence ID" value="AAI68577.1"/>
    <property type="molecule type" value="mRNA"/>
</dbReference>
<dbReference type="RefSeq" id="NP_001128283.1">
    <property type="nucleotide sequence ID" value="NM_001134811.1"/>
</dbReference>
<dbReference type="SMR" id="B5DE93"/>
<dbReference type="FunCoup" id="B5DE93">
    <property type="interactions" value="2983"/>
</dbReference>
<dbReference type="STRING" id="8364.ENSXETP00000046682"/>
<dbReference type="PaxDb" id="8364-ENSXETP00000043552"/>
<dbReference type="GeneID" id="100038049"/>
<dbReference type="KEGG" id="xtr:100038049"/>
<dbReference type="AGR" id="Xenbase:XB-GENE-493308"/>
<dbReference type="CTD" id="51755"/>
<dbReference type="Xenbase" id="XB-GENE-493308">
    <property type="gene designation" value="cdk12"/>
</dbReference>
<dbReference type="eggNOG" id="KOG0600">
    <property type="taxonomic scope" value="Eukaryota"/>
</dbReference>
<dbReference type="InParanoid" id="B5DE93"/>
<dbReference type="OrthoDB" id="28397at2759"/>
<dbReference type="Reactome" id="R-XTR-6796648">
    <property type="pathway name" value="TP53 Regulates Transcription of DNA Repair Genes"/>
</dbReference>
<dbReference type="Proteomes" id="UP000008143">
    <property type="component" value="Chromosome 10"/>
</dbReference>
<dbReference type="GO" id="GO:0019908">
    <property type="term" value="C:nuclear cyclin-dependent protein kinase holoenzyme complex"/>
    <property type="evidence" value="ECO:0000250"/>
    <property type="project" value="UniProtKB"/>
</dbReference>
<dbReference type="GO" id="GO:0016607">
    <property type="term" value="C:nuclear speck"/>
    <property type="evidence" value="ECO:0000250"/>
    <property type="project" value="UniProtKB"/>
</dbReference>
<dbReference type="GO" id="GO:0005524">
    <property type="term" value="F:ATP binding"/>
    <property type="evidence" value="ECO:0007669"/>
    <property type="project" value="UniProtKB-KW"/>
</dbReference>
<dbReference type="GO" id="GO:0004693">
    <property type="term" value="F:cyclin-dependent protein serine/threonine kinase activity"/>
    <property type="evidence" value="ECO:0007669"/>
    <property type="project" value="UniProtKB-EC"/>
</dbReference>
<dbReference type="GO" id="GO:0106310">
    <property type="term" value="F:protein serine kinase activity"/>
    <property type="evidence" value="ECO:0007669"/>
    <property type="project" value="RHEA"/>
</dbReference>
<dbReference type="GO" id="GO:0008353">
    <property type="term" value="F:RNA polymerase II CTD heptapeptide repeat kinase activity"/>
    <property type="evidence" value="ECO:0000250"/>
    <property type="project" value="UniProtKB"/>
</dbReference>
<dbReference type="GO" id="GO:0006397">
    <property type="term" value="P:mRNA processing"/>
    <property type="evidence" value="ECO:0007669"/>
    <property type="project" value="UniProtKB-KW"/>
</dbReference>
<dbReference type="GO" id="GO:0045944">
    <property type="term" value="P:positive regulation of transcription by RNA polymerase II"/>
    <property type="evidence" value="ECO:0000250"/>
    <property type="project" value="UniProtKB"/>
</dbReference>
<dbReference type="GO" id="GO:0043405">
    <property type="term" value="P:regulation of MAP kinase activity"/>
    <property type="evidence" value="ECO:0000250"/>
    <property type="project" value="UniProtKB"/>
</dbReference>
<dbReference type="GO" id="GO:0008380">
    <property type="term" value="P:RNA splicing"/>
    <property type="evidence" value="ECO:0000250"/>
    <property type="project" value="UniProtKB"/>
</dbReference>
<dbReference type="CDD" id="cd07864">
    <property type="entry name" value="STKc_CDK12"/>
    <property type="match status" value="1"/>
</dbReference>
<dbReference type="FunFam" id="1.10.510.10:FF:000102">
    <property type="entry name" value="cyclin-dependent kinase 12 isoform X1"/>
    <property type="match status" value="1"/>
</dbReference>
<dbReference type="FunFam" id="3.30.200.20:FF:000074">
    <property type="entry name" value="cyclin-dependent kinase 12 isoform X2"/>
    <property type="match status" value="1"/>
</dbReference>
<dbReference type="Gene3D" id="3.30.200.20">
    <property type="entry name" value="Phosphorylase Kinase, domain 1"/>
    <property type="match status" value="1"/>
</dbReference>
<dbReference type="Gene3D" id="1.10.510.10">
    <property type="entry name" value="Transferase(Phosphotransferase) domain 1"/>
    <property type="match status" value="1"/>
</dbReference>
<dbReference type="InterPro" id="IPR050108">
    <property type="entry name" value="CDK"/>
</dbReference>
<dbReference type="InterPro" id="IPR011009">
    <property type="entry name" value="Kinase-like_dom_sf"/>
</dbReference>
<dbReference type="InterPro" id="IPR000719">
    <property type="entry name" value="Prot_kinase_dom"/>
</dbReference>
<dbReference type="InterPro" id="IPR017441">
    <property type="entry name" value="Protein_kinase_ATP_BS"/>
</dbReference>
<dbReference type="InterPro" id="IPR008271">
    <property type="entry name" value="Ser/Thr_kinase_AS"/>
</dbReference>
<dbReference type="PANTHER" id="PTHR24056">
    <property type="entry name" value="CELL DIVISION PROTEIN KINASE"/>
    <property type="match status" value="1"/>
</dbReference>
<dbReference type="PANTHER" id="PTHR24056:SF126">
    <property type="entry name" value="CYCLIN-DEPENDENT KINASE 12"/>
    <property type="match status" value="1"/>
</dbReference>
<dbReference type="Pfam" id="PF00069">
    <property type="entry name" value="Pkinase"/>
    <property type="match status" value="1"/>
</dbReference>
<dbReference type="SMART" id="SM00220">
    <property type="entry name" value="S_TKc"/>
    <property type="match status" value="1"/>
</dbReference>
<dbReference type="SUPFAM" id="SSF56112">
    <property type="entry name" value="Protein kinase-like (PK-like)"/>
    <property type="match status" value="1"/>
</dbReference>
<dbReference type="PROSITE" id="PS00107">
    <property type="entry name" value="PROTEIN_KINASE_ATP"/>
    <property type="match status" value="1"/>
</dbReference>
<dbReference type="PROSITE" id="PS50011">
    <property type="entry name" value="PROTEIN_KINASE_DOM"/>
    <property type="match status" value="1"/>
</dbReference>
<dbReference type="PROSITE" id="PS00108">
    <property type="entry name" value="PROTEIN_KINASE_ST"/>
    <property type="match status" value="1"/>
</dbReference>
<evidence type="ECO:0000250" key="1"/>
<evidence type="ECO:0000255" key="2">
    <source>
        <dbReference type="PROSITE-ProRule" id="PRU00159"/>
    </source>
</evidence>
<evidence type="ECO:0000255" key="3">
    <source>
        <dbReference type="PROSITE-ProRule" id="PRU10027"/>
    </source>
</evidence>
<evidence type="ECO:0000256" key="4">
    <source>
        <dbReference type="SAM" id="MobiDB-lite"/>
    </source>
</evidence>
<evidence type="ECO:0000305" key="5"/>
<feature type="chain" id="PRO_0000406959" description="Cyclin-dependent kinase 12">
    <location>
        <begin position="1"/>
        <end position="1239"/>
    </location>
</feature>
<feature type="domain" description="Protein kinase" evidence="2">
    <location>
        <begin position="710"/>
        <end position="1003"/>
    </location>
</feature>
<feature type="region of interest" description="Disordered" evidence="4">
    <location>
        <begin position="1"/>
        <end position="421"/>
    </location>
</feature>
<feature type="region of interest" description="Disordered" evidence="4">
    <location>
        <begin position="437"/>
        <end position="557"/>
    </location>
</feature>
<feature type="region of interest" description="Disordered" evidence="4">
    <location>
        <begin position="570"/>
        <end position="687"/>
    </location>
</feature>
<feature type="region of interest" description="Disordered" evidence="4">
    <location>
        <begin position="1037"/>
        <end position="1074"/>
    </location>
</feature>
<feature type="region of interest" description="Disordered" evidence="4">
    <location>
        <begin position="1146"/>
        <end position="1168"/>
    </location>
</feature>
<feature type="region of interest" description="Disordered" evidence="4">
    <location>
        <begin position="1191"/>
        <end position="1239"/>
    </location>
</feature>
<feature type="compositionally biased region" description="Polar residues" evidence="4">
    <location>
        <begin position="15"/>
        <end position="28"/>
    </location>
</feature>
<feature type="compositionally biased region" description="Basic residues" evidence="4">
    <location>
        <begin position="35"/>
        <end position="46"/>
    </location>
</feature>
<feature type="compositionally biased region" description="Basic and acidic residues" evidence="4">
    <location>
        <begin position="81"/>
        <end position="100"/>
    </location>
</feature>
<feature type="compositionally biased region" description="Basic residues" evidence="4">
    <location>
        <begin position="101"/>
        <end position="112"/>
    </location>
</feature>
<feature type="compositionally biased region" description="Basic and acidic residues" evidence="4">
    <location>
        <begin position="113"/>
        <end position="131"/>
    </location>
</feature>
<feature type="compositionally biased region" description="Basic and acidic residues" evidence="4">
    <location>
        <begin position="140"/>
        <end position="172"/>
    </location>
</feature>
<feature type="compositionally biased region" description="Basic and acidic residues" evidence="4">
    <location>
        <begin position="179"/>
        <end position="190"/>
    </location>
</feature>
<feature type="compositionally biased region" description="Basic residues" evidence="4">
    <location>
        <begin position="191"/>
        <end position="201"/>
    </location>
</feature>
<feature type="compositionally biased region" description="Basic and acidic residues" evidence="4">
    <location>
        <begin position="202"/>
        <end position="212"/>
    </location>
</feature>
<feature type="compositionally biased region" description="Basic residues" evidence="4">
    <location>
        <begin position="213"/>
        <end position="222"/>
    </location>
</feature>
<feature type="compositionally biased region" description="Polar residues" evidence="4">
    <location>
        <begin position="273"/>
        <end position="284"/>
    </location>
</feature>
<feature type="compositionally biased region" description="Basic residues" evidence="4">
    <location>
        <begin position="285"/>
        <end position="297"/>
    </location>
</feature>
<feature type="compositionally biased region" description="Low complexity" evidence="4">
    <location>
        <begin position="300"/>
        <end position="337"/>
    </location>
</feature>
<feature type="compositionally biased region" description="Low complexity" evidence="4">
    <location>
        <begin position="345"/>
        <end position="357"/>
    </location>
</feature>
<feature type="compositionally biased region" description="Basic residues" evidence="4">
    <location>
        <begin position="358"/>
        <end position="370"/>
    </location>
</feature>
<feature type="compositionally biased region" description="Polar residues" evidence="4">
    <location>
        <begin position="448"/>
        <end position="457"/>
    </location>
</feature>
<feature type="compositionally biased region" description="Basic and acidic residues" evidence="4">
    <location>
        <begin position="459"/>
        <end position="506"/>
    </location>
</feature>
<feature type="compositionally biased region" description="Pro residues" evidence="4">
    <location>
        <begin position="507"/>
        <end position="552"/>
    </location>
</feature>
<feature type="compositionally biased region" description="Polar residues" evidence="4">
    <location>
        <begin position="570"/>
        <end position="586"/>
    </location>
</feature>
<feature type="compositionally biased region" description="Pro residues" evidence="4">
    <location>
        <begin position="587"/>
        <end position="596"/>
    </location>
</feature>
<feature type="compositionally biased region" description="Basic and acidic residues" evidence="4">
    <location>
        <begin position="636"/>
        <end position="649"/>
    </location>
</feature>
<feature type="compositionally biased region" description="Pro residues" evidence="4">
    <location>
        <begin position="653"/>
        <end position="667"/>
    </location>
</feature>
<feature type="compositionally biased region" description="Polar residues" evidence="4">
    <location>
        <begin position="1063"/>
        <end position="1074"/>
    </location>
</feature>
<feature type="compositionally biased region" description="Polar residues" evidence="4">
    <location>
        <begin position="1199"/>
        <end position="1209"/>
    </location>
</feature>
<feature type="active site" description="Proton acceptor" evidence="2 3">
    <location>
        <position position="842"/>
    </location>
</feature>
<feature type="binding site" evidence="2">
    <location>
        <begin position="716"/>
        <end position="724"/>
    </location>
    <ligand>
        <name>ATP</name>
        <dbReference type="ChEBI" id="CHEBI:30616"/>
    </ligand>
</feature>
<feature type="binding site" evidence="2">
    <location>
        <position position="739"/>
    </location>
    <ligand>
        <name>ATP</name>
        <dbReference type="ChEBI" id="CHEBI:30616"/>
    </ligand>
</feature>
<feature type="binding site" evidence="2">
    <location>
        <begin position="797"/>
        <end position="802"/>
    </location>
    <ligand>
        <name>ATP</name>
        <dbReference type="ChEBI" id="CHEBI:30616"/>
    </ligand>
</feature>
<feature type="binding site" evidence="2">
    <location>
        <position position="1023"/>
    </location>
    <ligand>
        <name>ATP</name>
        <dbReference type="ChEBI" id="CHEBI:30616"/>
    </ligand>
</feature>
<proteinExistence type="evidence at transcript level"/>
<organism>
    <name type="scientific">Xenopus tropicalis</name>
    <name type="common">Western clawed frog</name>
    <name type="synonym">Silurana tropicalis</name>
    <dbReference type="NCBI Taxonomy" id="8364"/>
    <lineage>
        <taxon>Eukaryota</taxon>
        <taxon>Metazoa</taxon>
        <taxon>Chordata</taxon>
        <taxon>Craniata</taxon>
        <taxon>Vertebrata</taxon>
        <taxon>Euteleostomi</taxon>
        <taxon>Amphibia</taxon>
        <taxon>Batrachia</taxon>
        <taxon>Anura</taxon>
        <taxon>Pipoidea</taxon>
        <taxon>Pipidae</taxon>
        <taxon>Xenopodinae</taxon>
        <taxon>Xenopus</taxon>
        <taxon>Silurana</taxon>
    </lineage>
</organism>
<reference key="1">
    <citation type="submission" date="2008-08" db="EMBL/GenBank/DDBJ databases">
        <authorList>
            <consortium name="NIH - Xenopus Gene Collection (XGC) project"/>
        </authorList>
    </citation>
    <scope>NUCLEOTIDE SEQUENCE [LARGE SCALE MRNA]</scope>
    <source>
        <tissue>Testis</tissue>
    </source>
</reference>
<protein>
    <recommendedName>
        <fullName>Cyclin-dependent kinase 12</fullName>
        <ecNumber>2.7.11.22</ecNumber>
        <ecNumber>2.7.11.23</ecNumber>
    </recommendedName>
    <alternativeName>
        <fullName>Cell division protein kinase 12</fullName>
    </alternativeName>
</protein>
<comment type="function">
    <text evidence="1">Cyclin-dependent kinase that phosphorylates the C-terminal domain (CTD) of the large subunit of RNA polymerase II (POLR2A), thereby acting as a key regulator of transcription elongation. Regulates the expression of genes involved in DNA repair and is required for the maintenance of genomic stability. Preferentially phosphorylates 'Ser-5' in CTD repeats that are already phosphorylated at 'Ser-7', but can also phosphorylate 'Ser-2'. Required for RNA splicing, possibly by phosphorylating srsf1/sf2 (By similarity).</text>
</comment>
<comment type="catalytic activity">
    <reaction>
        <text>[DNA-directed RNA polymerase] + ATP = phospho-[DNA-directed RNA polymerase] + ADP + H(+)</text>
        <dbReference type="Rhea" id="RHEA:10216"/>
        <dbReference type="Rhea" id="RHEA-COMP:11321"/>
        <dbReference type="Rhea" id="RHEA-COMP:11322"/>
        <dbReference type="ChEBI" id="CHEBI:15378"/>
        <dbReference type="ChEBI" id="CHEBI:30616"/>
        <dbReference type="ChEBI" id="CHEBI:43176"/>
        <dbReference type="ChEBI" id="CHEBI:68546"/>
        <dbReference type="ChEBI" id="CHEBI:456216"/>
        <dbReference type="EC" id="2.7.11.23"/>
    </reaction>
</comment>
<comment type="catalytic activity">
    <reaction>
        <text>L-seryl-[protein] + ATP = O-phospho-L-seryl-[protein] + ADP + H(+)</text>
        <dbReference type="Rhea" id="RHEA:17989"/>
        <dbReference type="Rhea" id="RHEA-COMP:9863"/>
        <dbReference type="Rhea" id="RHEA-COMP:11604"/>
        <dbReference type="ChEBI" id="CHEBI:15378"/>
        <dbReference type="ChEBI" id="CHEBI:29999"/>
        <dbReference type="ChEBI" id="CHEBI:30616"/>
        <dbReference type="ChEBI" id="CHEBI:83421"/>
        <dbReference type="ChEBI" id="CHEBI:456216"/>
        <dbReference type="EC" id="2.7.11.22"/>
    </reaction>
</comment>
<comment type="catalytic activity">
    <reaction>
        <text>L-threonyl-[protein] + ATP = O-phospho-L-threonyl-[protein] + ADP + H(+)</text>
        <dbReference type="Rhea" id="RHEA:46608"/>
        <dbReference type="Rhea" id="RHEA-COMP:11060"/>
        <dbReference type="Rhea" id="RHEA-COMP:11605"/>
        <dbReference type="ChEBI" id="CHEBI:15378"/>
        <dbReference type="ChEBI" id="CHEBI:30013"/>
        <dbReference type="ChEBI" id="CHEBI:30616"/>
        <dbReference type="ChEBI" id="CHEBI:61977"/>
        <dbReference type="ChEBI" id="CHEBI:456216"/>
        <dbReference type="EC" id="2.7.11.22"/>
    </reaction>
</comment>
<comment type="subcellular location">
    <subcellularLocation>
        <location evidence="1">Nucleus</location>
    </subcellularLocation>
    <subcellularLocation>
        <location evidence="1">Nucleus speckle</location>
    </subcellularLocation>
</comment>
<comment type="similarity">
    <text evidence="5">Belongs to the protein kinase superfamily. CMGC Ser/Thr protein kinase family. CDC2/CDKX subfamily.</text>
</comment>
<sequence length="1239" mass="138328">MPNPVRHGNKKDSGGSASTMPESSGSVNNKDRQRISSKHKRHKSKHLRESSVPEPQTLSTLKLVEYDDISSDSDTFSDVPAKQERRENDERRPSEKSDKMHKSRHRHQHKRLKEATRTKQVEKERKPEKTQEVMVNKVPSSKDKIISSAKRTADEQEEHGRTSKSSSKDSRSKMHKDKSRREREMKSGHKERSKSHRKRDSSKRYKTSDSPKRKGRSPRRKYGGSPKQDDSHSEGSCGQDYDDSPSRVHASGNFNETYRKNMDSPSYKEPAAYQSSARSPSPYSRKQRSVSPYRRRSSSYERGSGSYSGRSPSPYVRRRSSSPFVSRRSLSRSPAPRKSAKSRSRSPLYPRKSSSSSRSKKQKSQSRSRHSSISPARLPLNSSLGAELSRKKKEIAAAAAAAGRESKGSPLILKKESGDSRVASALDLKKATKVLKLEKPVSEPEMVTATSSETKTISAKKEESEKKPQVQAKDPKISGLKDCKPAAIKEEVLTPKEGVTDRDKDVPPLPPILSPPPPLPTSPPSNIPPLPPLPPSPAVLQQPPPPLPPPPTLTFLPLPTTVAASLTSSHYVRQSSLSTQANSQLPVPSPAKPQPPLIHMVPHMKTSTLPPLPLPPLLLGEDDIESPKEIPPPKSVKKEKDKDRPRHLLTDLPLPPELPGGDPSPPDSPERKVVAPPQPPLKKRPKICCPRYGERKQTETDWGKRCVDKFDIIGIIGEGTYGQVYKAKDKDTGELVALKKVRLDNEKEGFPITAIREIKILRQLIHKSVVNMKEIVTDKQDALDFKKDKGAFYLVFEYMDHDLMGLLESGLVQFSEDHIKSFMKQLMEGLEYCHKKNFLHRDIKCSNILLNNSGQIKLADFGLARLYSSEESRPYTNKVITLWYRPPELLLGEERYTPAIDVWSCGCILGELFTKKPIFQANQELAQLELISRLCGSPCPAVWPDVIKLPYFNTMKPKKQYRRRLREEFSFVPTPALDLLDHMLTLDPSKRCTAEQTLQSDFLKDVDVCKMATPDLPHWQDCHELWSKKRRRQRQSGIVLEEPPAIKAPRKESVSVPGGDAMKNSSPAPTQPVKTESSVSDLAVLGDITQQLNQSELAVLLNLLQSQTDLSVSQISQLLNVQANPDMQLQLEALNQSITALTGAAVPPQEVEPPKETPTLDQVDPLGAGTQGEVQNVLAVLLSQLLKPQEVVDAPGESNGEQSGSNPTAHITLEEEEEPDKHHEQNEEEEEDAGNYWSP</sequence>
<gene>
    <name type="primary">cdk12</name>
</gene>